<name>TYPH_METCA</name>
<organism>
    <name type="scientific">Methylococcus capsulatus (strain ATCC 33009 / NCIMB 11132 / Bath)</name>
    <dbReference type="NCBI Taxonomy" id="243233"/>
    <lineage>
        <taxon>Bacteria</taxon>
        <taxon>Pseudomonadati</taxon>
        <taxon>Pseudomonadota</taxon>
        <taxon>Gammaproteobacteria</taxon>
        <taxon>Methylococcales</taxon>
        <taxon>Methylococcaceae</taxon>
        <taxon>Methylococcus</taxon>
    </lineage>
</organism>
<reference key="1">
    <citation type="journal article" date="2004" name="PLoS Biol.">
        <title>Genomic insights into methanotrophy: the complete genome sequence of Methylococcus capsulatus (Bath).</title>
        <authorList>
            <person name="Ward N.L."/>
            <person name="Larsen O."/>
            <person name="Sakwa J."/>
            <person name="Bruseth L."/>
            <person name="Khouri H.M."/>
            <person name="Durkin A.S."/>
            <person name="Dimitrov G."/>
            <person name="Jiang L."/>
            <person name="Scanlan D."/>
            <person name="Kang K.H."/>
            <person name="Lewis M.R."/>
            <person name="Nelson K.E."/>
            <person name="Methe B.A."/>
            <person name="Wu M."/>
            <person name="Heidelberg J.F."/>
            <person name="Paulsen I.T."/>
            <person name="Fouts D.E."/>
            <person name="Ravel J."/>
            <person name="Tettelin H."/>
            <person name="Ren Q."/>
            <person name="Read T.D."/>
            <person name="DeBoy R.T."/>
            <person name="Seshadri R."/>
            <person name="Salzberg S.L."/>
            <person name="Jensen H.B."/>
            <person name="Birkeland N.K."/>
            <person name="Nelson W.C."/>
            <person name="Dodson R.J."/>
            <person name="Grindhaug S.H."/>
            <person name="Holt I.E."/>
            <person name="Eidhammer I."/>
            <person name="Jonasen I."/>
            <person name="Vanaken S."/>
            <person name="Utterback T.R."/>
            <person name="Feldblyum T.V."/>
            <person name="Fraser C.M."/>
            <person name="Lillehaug J.R."/>
            <person name="Eisen J.A."/>
        </authorList>
    </citation>
    <scope>NUCLEOTIDE SEQUENCE [LARGE SCALE GENOMIC DNA]</scope>
    <source>
        <strain>ATCC 33009 / NCIMB 11132 / Bath</strain>
    </source>
</reference>
<keyword id="KW-0328">Glycosyltransferase</keyword>
<keyword id="KW-1185">Reference proteome</keyword>
<keyword id="KW-0808">Transferase</keyword>
<dbReference type="EC" id="2.4.2.4" evidence="1"/>
<dbReference type="EMBL" id="AE017282">
    <property type="protein sequence ID" value="AAU92022.1"/>
    <property type="molecule type" value="Genomic_DNA"/>
</dbReference>
<dbReference type="RefSeq" id="WP_010960971.1">
    <property type="nucleotide sequence ID" value="NC_002977.6"/>
</dbReference>
<dbReference type="SMR" id="Q607P2"/>
<dbReference type="STRING" id="243233.MCA1717"/>
<dbReference type="GeneID" id="88223971"/>
<dbReference type="KEGG" id="mca:MCA1717"/>
<dbReference type="eggNOG" id="COG0213">
    <property type="taxonomic scope" value="Bacteria"/>
</dbReference>
<dbReference type="HOGENOM" id="CLU_025040_6_0_6"/>
<dbReference type="Proteomes" id="UP000006821">
    <property type="component" value="Chromosome"/>
</dbReference>
<dbReference type="GO" id="GO:0005829">
    <property type="term" value="C:cytosol"/>
    <property type="evidence" value="ECO:0007669"/>
    <property type="project" value="TreeGrafter"/>
</dbReference>
<dbReference type="GO" id="GO:0004645">
    <property type="term" value="F:1,4-alpha-oligoglucan phosphorylase activity"/>
    <property type="evidence" value="ECO:0007669"/>
    <property type="project" value="InterPro"/>
</dbReference>
<dbReference type="GO" id="GO:0009032">
    <property type="term" value="F:thymidine phosphorylase activity"/>
    <property type="evidence" value="ECO:0007669"/>
    <property type="project" value="UniProtKB-UniRule"/>
</dbReference>
<dbReference type="GO" id="GO:0006206">
    <property type="term" value="P:pyrimidine nucleobase metabolic process"/>
    <property type="evidence" value="ECO:0007669"/>
    <property type="project" value="InterPro"/>
</dbReference>
<dbReference type="GO" id="GO:0006213">
    <property type="term" value="P:pyrimidine nucleoside metabolic process"/>
    <property type="evidence" value="ECO:0007669"/>
    <property type="project" value="InterPro"/>
</dbReference>
<dbReference type="Gene3D" id="1.20.970.50">
    <property type="match status" value="1"/>
</dbReference>
<dbReference type="Gene3D" id="3.40.1030.10">
    <property type="entry name" value="Nucleoside phosphorylase/phosphoribosyltransferase catalytic domain"/>
    <property type="match status" value="1"/>
</dbReference>
<dbReference type="Gene3D" id="3.90.1170.30">
    <property type="entry name" value="Pyrimidine nucleoside phosphorylase-like, C-terminal domain"/>
    <property type="match status" value="1"/>
</dbReference>
<dbReference type="HAMAP" id="MF_00703">
    <property type="entry name" value="Thymid_phosp_2"/>
    <property type="match status" value="1"/>
</dbReference>
<dbReference type="InterPro" id="IPR000312">
    <property type="entry name" value="Glycosyl_Trfase_fam3"/>
</dbReference>
<dbReference type="InterPro" id="IPR017459">
    <property type="entry name" value="Glycosyl_Trfase_fam3_N_dom"/>
</dbReference>
<dbReference type="InterPro" id="IPR036320">
    <property type="entry name" value="Glycosyl_Trfase_fam3_N_dom_sf"/>
</dbReference>
<dbReference type="InterPro" id="IPR035902">
    <property type="entry name" value="Nuc_phospho_transferase"/>
</dbReference>
<dbReference type="InterPro" id="IPR036566">
    <property type="entry name" value="PYNP-like_C_sf"/>
</dbReference>
<dbReference type="InterPro" id="IPR013102">
    <property type="entry name" value="PYNP_C"/>
</dbReference>
<dbReference type="InterPro" id="IPR017872">
    <property type="entry name" value="Pyrmidine_PPase_CS"/>
</dbReference>
<dbReference type="InterPro" id="IPR028579">
    <property type="entry name" value="Thym_Pase_Put"/>
</dbReference>
<dbReference type="InterPro" id="IPR013466">
    <property type="entry name" value="Thymidine/AMP_Pase"/>
</dbReference>
<dbReference type="InterPro" id="IPR000053">
    <property type="entry name" value="Thymidine/pyrmidine_PPase"/>
</dbReference>
<dbReference type="NCBIfam" id="TIGR02645">
    <property type="entry name" value="ARCH_P_rylase"/>
    <property type="match status" value="1"/>
</dbReference>
<dbReference type="NCBIfam" id="NF003338">
    <property type="entry name" value="PRK04350.1"/>
    <property type="match status" value="1"/>
</dbReference>
<dbReference type="PANTHER" id="PTHR10515">
    <property type="entry name" value="THYMIDINE PHOSPHORYLASE"/>
    <property type="match status" value="1"/>
</dbReference>
<dbReference type="PANTHER" id="PTHR10515:SF0">
    <property type="entry name" value="THYMIDINE PHOSPHORYLASE"/>
    <property type="match status" value="1"/>
</dbReference>
<dbReference type="Pfam" id="PF02885">
    <property type="entry name" value="Glycos_trans_3N"/>
    <property type="match status" value="1"/>
</dbReference>
<dbReference type="Pfam" id="PF00591">
    <property type="entry name" value="Glycos_transf_3"/>
    <property type="match status" value="1"/>
</dbReference>
<dbReference type="Pfam" id="PF07831">
    <property type="entry name" value="PYNP_C"/>
    <property type="match status" value="1"/>
</dbReference>
<dbReference type="SMART" id="SM00941">
    <property type="entry name" value="PYNP_C"/>
    <property type="match status" value="1"/>
</dbReference>
<dbReference type="SUPFAM" id="SSF52418">
    <property type="entry name" value="Nucleoside phosphorylase/phosphoribosyltransferase catalytic domain"/>
    <property type="match status" value="1"/>
</dbReference>
<dbReference type="SUPFAM" id="SSF47648">
    <property type="entry name" value="Nucleoside phosphorylase/phosphoribosyltransferase N-terminal domain"/>
    <property type="match status" value="1"/>
</dbReference>
<dbReference type="SUPFAM" id="SSF54680">
    <property type="entry name" value="Pyrimidine nucleoside phosphorylase C-terminal domain"/>
    <property type="match status" value="1"/>
</dbReference>
<dbReference type="PROSITE" id="PS00647">
    <property type="entry name" value="THYMID_PHOSPHORYLASE"/>
    <property type="match status" value="1"/>
</dbReference>
<feature type="chain" id="PRO_0000314703" description="Putative thymidine phosphorylase">
    <location>
        <begin position="1"/>
        <end position="516"/>
    </location>
</feature>
<evidence type="ECO:0000255" key="1">
    <source>
        <dbReference type="HAMAP-Rule" id="MF_00703"/>
    </source>
</evidence>
<gene>
    <name type="ordered locus">MCA1717</name>
</gene>
<accession>Q607P2</accession>
<comment type="catalytic activity">
    <reaction evidence="1">
        <text>thymidine + phosphate = 2-deoxy-alpha-D-ribose 1-phosphate + thymine</text>
        <dbReference type="Rhea" id="RHEA:16037"/>
        <dbReference type="ChEBI" id="CHEBI:17748"/>
        <dbReference type="ChEBI" id="CHEBI:17821"/>
        <dbReference type="ChEBI" id="CHEBI:43474"/>
        <dbReference type="ChEBI" id="CHEBI:57259"/>
        <dbReference type="EC" id="2.4.2.4"/>
    </reaction>
</comment>
<comment type="similarity">
    <text evidence="1">Belongs to the thymidine/pyrimidine-nucleoside phosphorylase family. Type 2 subfamily.</text>
</comment>
<protein>
    <recommendedName>
        <fullName evidence="1">Putative thymidine phosphorylase</fullName>
        <ecNumber evidence="1">2.4.2.4</ecNumber>
    </recommendedName>
    <alternativeName>
        <fullName evidence="1">TdRPase</fullName>
    </alternativeName>
</protein>
<sequence length="516" mass="56438">MSDEESIKTRLKLRPVAIDTYRENVAYLHRECSVYRAEGFQALAKIRVGCNGKQIEAVLNVVDDVCIVAPDELGLSEQAFQRFGEPAGQLVNVAQAEPPLSMDGVRRKIGGERLDYGDYQAITSDIAKGRYSKMEMAAFLVATGQNGLDRDEVLSLTRAMLETGVRLSWNEPLVADKHCIGGIPGNRTSLLIVPIVAAHGMLIPKTSSRAITSPAGTADTMEVLARTDLAPESLDRLVRMERGCLAWGGTTRLAPVDDMLISVERPLGIDSQGQMVASILSKKLAAGATHLLLDIPVGPTAKVRQMRDAMSLRKLFEYVGDRVGLHLEAVITDGAQPVGRGIGPVLEVRDVMQVLENDPEAPVDLREKSLRLAGRILEFDPDVRGGFGYSIARDILESGRALAKMHRIIDAQGRQERRLEPGRLVFEVRAERAGVVVGIDNFFLAQTARLAGAPMSRGAGVDLLNKLGDTVEEGQPLYRVYAEFPANFEFAREFTRTRSGYNIGDAAFLTKTHMEF</sequence>
<proteinExistence type="inferred from homology"/>